<dbReference type="EMBL" id="AF060092">
    <property type="protein sequence ID" value="AAD50537.1"/>
    <property type="molecule type" value="mRNA"/>
</dbReference>
<dbReference type="EMBL" id="AK002331">
    <property type="protein sequence ID" value="BAB22017.1"/>
    <property type="molecule type" value="mRNA"/>
</dbReference>
<dbReference type="EMBL" id="BC014783">
    <property type="protein sequence ID" value="AAH14783.1"/>
    <property type="molecule type" value="mRNA"/>
</dbReference>
<dbReference type="CCDS" id="CCDS25328.1"/>
<dbReference type="RefSeq" id="NP_036101.1">
    <property type="nucleotide sequence ID" value="NM_011971.4"/>
</dbReference>
<dbReference type="PDB" id="3UNB">
    <property type="method" value="X-ray"/>
    <property type="resolution" value="2.90 A"/>
    <property type="chains" value="I/W/k/y=1-205"/>
</dbReference>
<dbReference type="PDB" id="3UNE">
    <property type="method" value="X-ray"/>
    <property type="resolution" value="3.20 A"/>
    <property type="chains" value="I/W/k/y=1-205"/>
</dbReference>
<dbReference type="PDB" id="3UNF">
    <property type="method" value="X-ray"/>
    <property type="resolution" value="2.90 A"/>
    <property type="chains" value="I/W=1-205"/>
</dbReference>
<dbReference type="PDB" id="3UNH">
    <property type="method" value="X-ray"/>
    <property type="resolution" value="3.20 A"/>
    <property type="chains" value="I/W=1-205"/>
</dbReference>
<dbReference type="PDB" id="8YPK">
    <property type="method" value="EM"/>
    <property type="resolution" value="2.70 A"/>
    <property type="chains" value="U/Y=1-205"/>
</dbReference>
<dbReference type="PDB" id="8YVP">
    <property type="method" value="EM"/>
    <property type="resolution" value="2.50 A"/>
    <property type="chains" value="U/Y=1-205"/>
</dbReference>
<dbReference type="PDBsum" id="3UNB"/>
<dbReference type="PDBsum" id="3UNE"/>
<dbReference type="PDBsum" id="3UNF"/>
<dbReference type="PDBsum" id="3UNH"/>
<dbReference type="PDBsum" id="8YPK"/>
<dbReference type="PDBsum" id="8YVP"/>
<dbReference type="EMDB" id="EMD-39482"/>
<dbReference type="EMDB" id="EMD-39612"/>
<dbReference type="SMR" id="Q9R1P1"/>
<dbReference type="BioGRID" id="204997">
    <property type="interactions" value="51"/>
</dbReference>
<dbReference type="CORUM" id="Q9R1P1"/>
<dbReference type="FunCoup" id="Q9R1P1">
    <property type="interactions" value="2947"/>
</dbReference>
<dbReference type="IntAct" id="Q9R1P1">
    <property type="interactions" value="3"/>
</dbReference>
<dbReference type="STRING" id="10090.ENSMUSP00000099436"/>
<dbReference type="MEROPS" id="T01.983"/>
<dbReference type="GlyGen" id="Q9R1P1">
    <property type="glycosylation" value="1 site, 1 O-linked glycan (1 site)"/>
</dbReference>
<dbReference type="iPTMnet" id="Q9R1P1"/>
<dbReference type="PhosphoSitePlus" id="Q9R1P1"/>
<dbReference type="SwissPalm" id="Q9R1P1"/>
<dbReference type="REPRODUCTION-2DPAGE" id="Q9R1P1"/>
<dbReference type="jPOST" id="Q9R1P1"/>
<dbReference type="PaxDb" id="10090-ENSMUSP00000099436"/>
<dbReference type="ProteomicsDB" id="291656"/>
<dbReference type="Pumba" id="Q9R1P1"/>
<dbReference type="Antibodypedia" id="73543">
    <property type="antibodies" value="134 antibodies from 31 providers"/>
</dbReference>
<dbReference type="DNASU" id="26446"/>
<dbReference type="Ensembl" id="ENSMUST00000103147.5">
    <property type="protein sequence ID" value="ENSMUSP00000099436.5"/>
    <property type="gene ID" value="ENSMUSG00000069744.8"/>
</dbReference>
<dbReference type="GeneID" id="26446"/>
<dbReference type="KEGG" id="mmu:26446"/>
<dbReference type="UCSC" id="uc007lep.1">
    <property type="organism name" value="mouse"/>
</dbReference>
<dbReference type="AGR" id="MGI:1347014"/>
<dbReference type="CTD" id="5691"/>
<dbReference type="MGI" id="MGI:1347014">
    <property type="gene designation" value="Psmb3"/>
</dbReference>
<dbReference type="VEuPathDB" id="HostDB:ENSMUSG00000069744"/>
<dbReference type="eggNOG" id="KOG0180">
    <property type="taxonomic scope" value="Eukaryota"/>
</dbReference>
<dbReference type="GeneTree" id="ENSGT00550000074820"/>
<dbReference type="HOGENOM" id="CLU_035750_10_0_1"/>
<dbReference type="InParanoid" id="Q9R1P1"/>
<dbReference type="OMA" id="CSEQLYG"/>
<dbReference type="OrthoDB" id="204949at2759"/>
<dbReference type="PhylomeDB" id="Q9R1P1"/>
<dbReference type="TreeFam" id="TF106216"/>
<dbReference type="Reactome" id="R-MMU-1169091">
    <property type="pathway name" value="Activation of NF-kappaB in B cells"/>
</dbReference>
<dbReference type="Reactome" id="R-MMU-1234176">
    <property type="pathway name" value="Oxygen-dependent proline hydroxylation of Hypoxia-inducible Factor Alpha"/>
</dbReference>
<dbReference type="Reactome" id="R-MMU-1236978">
    <property type="pathway name" value="Cross-presentation of soluble exogenous antigens (endosomes)"/>
</dbReference>
<dbReference type="Reactome" id="R-MMU-174084">
    <property type="pathway name" value="Autodegradation of Cdh1 by Cdh1:APC/C"/>
</dbReference>
<dbReference type="Reactome" id="R-MMU-174154">
    <property type="pathway name" value="APC/C:Cdc20 mediated degradation of Securin"/>
</dbReference>
<dbReference type="Reactome" id="R-MMU-174178">
    <property type="pathway name" value="APC/C:Cdh1 mediated degradation of Cdc20 and other APC/C:Cdh1 targeted proteins in late mitosis/early G1"/>
</dbReference>
<dbReference type="Reactome" id="R-MMU-174184">
    <property type="pathway name" value="Cdc20:Phospho-APC/C mediated degradation of Cyclin A"/>
</dbReference>
<dbReference type="Reactome" id="R-MMU-187577">
    <property type="pathway name" value="SCF(Skp2)-mediated degradation of p27/p21"/>
</dbReference>
<dbReference type="Reactome" id="R-MMU-195253">
    <property type="pathway name" value="Degradation of beta-catenin by the destruction complex"/>
</dbReference>
<dbReference type="Reactome" id="R-MMU-202424">
    <property type="pathway name" value="Downstream TCR signaling"/>
</dbReference>
<dbReference type="Reactome" id="R-MMU-2467813">
    <property type="pathway name" value="Separation of Sister Chromatids"/>
</dbReference>
<dbReference type="Reactome" id="R-MMU-2871837">
    <property type="pathway name" value="FCERI mediated NF-kB activation"/>
</dbReference>
<dbReference type="Reactome" id="R-MMU-349425">
    <property type="pathway name" value="Autodegradation of the E3 ubiquitin ligase COP1"/>
</dbReference>
<dbReference type="Reactome" id="R-MMU-350562">
    <property type="pathway name" value="Regulation of ornithine decarboxylase (ODC)"/>
</dbReference>
<dbReference type="Reactome" id="R-MMU-382556">
    <property type="pathway name" value="ABC-family proteins mediated transport"/>
</dbReference>
<dbReference type="Reactome" id="R-MMU-450408">
    <property type="pathway name" value="AUF1 (hnRNP D0) binds and destabilizes mRNA"/>
</dbReference>
<dbReference type="Reactome" id="R-MMU-4608870">
    <property type="pathway name" value="Asymmetric localization of PCP proteins"/>
</dbReference>
<dbReference type="Reactome" id="R-MMU-4641257">
    <property type="pathway name" value="Degradation of AXIN"/>
</dbReference>
<dbReference type="Reactome" id="R-MMU-4641258">
    <property type="pathway name" value="Degradation of DVL"/>
</dbReference>
<dbReference type="Reactome" id="R-MMU-5358346">
    <property type="pathway name" value="Hedgehog ligand biogenesis"/>
</dbReference>
<dbReference type="Reactome" id="R-MMU-5607761">
    <property type="pathway name" value="Dectin-1 mediated noncanonical NF-kB signaling"/>
</dbReference>
<dbReference type="Reactome" id="R-MMU-5607764">
    <property type="pathway name" value="CLEC7A (Dectin-1) signaling"/>
</dbReference>
<dbReference type="Reactome" id="R-MMU-5610780">
    <property type="pathway name" value="Degradation of GLI1 by the proteasome"/>
</dbReference>
<dbReference type="Reactome" id="R-MMU-5610785">
    <property type="pathway name" value="GLI3 is processed to GLI3R by the proteasome"/>
</dbReference>
<dbReference type="Reactome" id="R-MMU-5632684">
    <property type="pathway name" value="Hedgehog 'on' state"/>
</dbReference>
<dbReference type="Reactome" id="R-MMU-5658442">
    <property type="pathway name" value="Regulation of RAS by GAPs"/>
</dbReference>
<dbReference type="Reactome" id="R-MMU-5668541">
    <property type="pathway name" value="TNFR2 non-canonical NF-kB pathway"/>
</dbReference>
<dbReference type="Reactome" id="R-MMU-5676590">
    <property type="pathway name" value="NIK--&gt;noncanonical NF-kB signaling"/>
</dbReference>
<dbReference type="Reactome" id="R-MMU-5687128">
    <property type="pathway name" value="MAPK6/MAPK4 signaling"/>
</dbReference>
<dbReference type="Reactome" id="R-MMU-5689603">
    <property type="pathway name" value="UCH proteinases"/>
</dbReference>
<dbReference type="Reactome" id="R-MMU-5689880">
    <property type="pathway name" value="Ub-specific processing proteases"/>
</dbReference>
<dbReference type="Reactome" id="R-MMU-68867">
    <property type="pathway name" value="Assembly of the pre-replicative complex"/>
</dbReference>
<dbReference type="Reactome" id="R-MMU-68949">
    <property type="pathway name" value="Orc1 removal from chromatin"/>
</dbReference>
<dbReference type="Reactome" id="R-MMU-69017">
    <property type="pathway name" value="CDK-mediated phosphorylation and removal of Cdc6"/>
</dbReference>
<dbReference type="Reactome" id="R-MMU-69481">
    <property type="pathway name" value="G2/M Checkpoints"/>
</dbReference>
<dbReference type="Reactome" id="R-MMU-69601">
    <property type="pathway name" value="Ubiquitin Mediated Degradation of Phosphorylated Cdc25A"/>
</dbReference>
<dbReference type="Reactome" id="R-MMU-75815">
    <property type="pathway name" value="Ubiquitin-dependent degradation of Cyclin D"/>
</dbReference>
<dbReference type="Reactome" id="R-MMU-8852276">
    <property type="pathway name" value="The role of GTSE1 in G2/M progression after G2 checkpoint"/>
</dbReference>
<dbReference type="Reactome" id="R-MMU-8854050">
    <property type="pathway name" value="FBXL7 down-regulates AURKA during mitotic entry and in early mitosis"/>
</dbReference>
<dbReference type="Reactome" id="R-MMU-8939236">
    <property type="pathway name" value="RUNX1 regulates transcription of genes involved in differentiation of HSCs"/>
</dbReference>
<dbReference type="Reactome" id="R-MMU-8939902">
    <property type="pathway name" value="Regulation of RUNX2 expression and activity"/>
</dbReference>
<dbReference type="Reactome" id="R-MMU-8941858">
    <property type="pathway name" value="Regulation of RUNX3 expression and activity"/>
</dbReference>
<dbReference type="Reactome" id="R-MMU-8948751">
    <property type="pathway name" value="Regulation of PTEN stability and activity"/>
</dbReference>
<dbReference type="Reactome" id="R-MMU-8951664">
    <property type="pathway name" value="Neddylation"/>
</dbReference>
<dbReference type="Reactome" id="R-MMU-9020702">
    <property type="pathway name" value="Interleukin-1 signaling"/>
</dbReference>
<dbReference type="Reactome" id="R-MMU-9755511">
    <property type="pathway name" value="KEAP1-NFE2L2 pathway"/>
</dbReference>
<dbReference type="Reactome" id="R-MMU-9762114">
    <property type="pathway name" value="GSK3B and BTRC:CUL1-mediated-degradation of NFE2L2"/>
</dbReference>
<dbReference type="Reactome" id="R-MMU-983168">
    <property type="pathway name" value="Antigen processing: Ubiquitination &amp; Proteasome degradation"/>
</dbReference>
<dbReference type="Reactome" id="R-MMU-9907900">
    <property type="pathway name" value="Proteasome assembly"/>
</dbReference>
<dbReference type="BioGRID-ORCS" id="26446">
    <property type="hits" value="24 hits in 64 CRISPR screens"/>
</dbReference>
<dbReference type="ChiTaRS" id="Psmb3">
    <property type="organism name" value="mouse"/>
</dbReference>
<dbReference type="EvolutionaryTrace" id="Q9R1P1"/>
<dbReference type="PRO" id="PR:Q9R1P1"/>
<dbReference type="Proteomes" id="UP000000589">
    <property type="component" value="Chromosome 11"/>
</dbReference>
<dbReference type="RNAct" id="Q9R1P1">
    <property type="molecule type" value="protein"/>
</dbReference>
<dbReference type="Bgee" id="ENSMUSG00000069744">
    <property type="expression patterns" value="Expressed in embryonic cell in blastocyst and 89 other cell types or tissues"/>
</dbReference>
<dbReference type="ExpressionAtlas" id="Q9R1P1">
    <property type="expression patterns" value="baseline and differential"/>
</dbReference>
<dbReference type="GO" id="GO:0005829">
    <property type="term" value="C:cytosol"/>
    <property type="evidence" value="ECO:0000304"/>
    <property type="project" value="Reactome"/>
</dbReference>
<dbReference type="GO" id="GO:0005654">
    <property type="term" value="C:nucleoplasm"/>
    <property type="evidence" value="ECO:0000304"/>
    <property type="project" value="Reactome"/>
</dbReference>
<dbReference type="GO" id="GO:0005839">
    <property type="term" value="C:proteasome core complex"/>
    <property type="evidence" value="ECO:0000314"/>
    <property type="project" value="UniProtKB"/>
</dbReference>
<dbReference type="GO" id="GO:0019774">
    <property type="term" value="C:proteasome core complex, beta-subunit complex"/>
    <property type="evidence" value="ECO:0000250"/>
    <property type="project" value="UniProtKB"/>
</dbReference>
<dbReference type="GO" id="GO:0004175">
    <property type="term" value="F:endopeptidase activity"/>
    <property type="evidence" value="ECO:0000266"/>
    <property type="project" value="MGI"/>
</dbReference>
<dbReference type="GO" id="GO:0043161">
    <property type="term" value="P:proteasome-mediated ubiquitin-dependent protein catabolic process"/>
    <property type="evidence" value="ECO:0007669"/>
    <property type="project" value="InterPro"/>
</dbReference>
<dbReference type="GO" id="GO:0030163">
    <property type="term" value="P:protein catabolic process"/>
    <property type="evidence" value="ECO:0000304"/>
    <property type="project" value="MGI"/>
</dbReference>
<dbReference type="CDD" id="cd03759">
    <property type="entry name" value="proteasome_beta_type_3"/>
    <property type="match status" value="1"/>
</dbReference>
<dbReference type="FunFam" id="3.60.20.10:FF:000003">
    <property type="entry name" value="Proteasome subunit beta type-3"/>
    <property type="match status" value="1"/>
</dbReference>
<dbReference type="Gene3D" id="3.60.20.10">
    <property type="entry name" value="Glutamine Phosphoribosylpyrophosphate, subunit 1, domain 1"/>
    <property type="match status" value="1"/>
</dbReference>
<dbReference type="InterPro" id="IPR029055">
    <property type="entry name" value="Ntn_hydrolases_N"/>
</dbReference>
<dbReference type="InterPro" id="IPR033811">
    <property type="entry name" value="Proteasome_beta_3"/>
</dbReference>
<dbReference type="InterPro" id="IPR016050">
    <property type="entry name" value="Proteasome_bsu_CS"/>
</dbReference>
<dbReference type="InterPro" id="IPR001353">
    <property type="entry name" value="Proteasome_sua/b"/>
</dbReference>
<dbReference type="InterPro" id="IPR023333">
    <property type="entry name" value="Proteasome_suB-type"/>
</dbReference>
<dbReference type="PANTHER" id="PTHR32194">
    <property type="entry name" value="METALLOPROTEASE TLDD"/>
    <property type="match status" value="1"/>
</dbReference>
<dbReference type="PANTHER" id="PTHR32194:SF10">
    <property type="entry name" value="PROTEASOME SUBUNIT BETA TYPE-3"/>
    <property type="match status" value="1"/>
</dbReference>
<dbReference type="Pfam" id="PF00227">
    <property type="entry name" value="Proteasome"/>
    <property type="match status" value="1"/>
</dbReference>
<dbReference type="SUPFAM" id="SSF56235">
    <property type="entry name" value="N-terminal nucleophile aminohydrolases (Ntn hydrolases)"/>
    <property type="match status" value="1"/>
</dbReference>
<dbReference type="PROSITE" id="PS00854">
    <property type="entry name" value="PROTEASOME_BETA_1"/>
    <property type="match status" value="1"/>
</dbReference>
<dbReference type="PROSITE" id="PS51476">
    <property type="entry name" value="PROTEASOME_BETA_2"/>
    <property type="match status" value="1"/>
</dbReference>
<sequence length="205" mass="22965">MSIMSYNGGAVMAMKGKNCVAIAADRRFGIQAQMVTTDFQKIFPMGDRLYIGLAGLATDVQTVAQRLKFRLNLYELKEGRQIKPYTLMSMVANLLYEKRFGPYYTEPVIAGLDPKTFKPFICSLDLIGCPMVTDDFVVSGTCSEQMYGMCESLWEPNMDPEHLFETISQAMLNAVDRDAVSGMGVIVHVIEKDKITTRTLKARMD</sequence>
<proteinExistence type="evidence at protein level"/>
<name>PSB3_MOUSE</name>
<keyword id="KW-0002">3D-structure</keyword>
<keyword id="KW-0007">Acetylation</keyword>
<keyword id="KW-0963">Cytoplasm</keyword>
<keyword id="KW-0903">Direct protein sequencing</keyword>
<keyword id="KW-0539">Nucleus</keyword>
<keyword id="KW-0647">Proteasome</keyword>
<keyword id="KW-1185">Reference proteome</keyword>
<gene>
    <name type="primary">Psmb3</name>
</gene>
<organism>
    <name type="scientific">Mus musculus</name>
    <name type="common">Mouse</name>
    <dbReference type="NCBI Taxonomy" id="10090"/>
    <lineage>
        <taxon>Eukaryota</taxon>
        <taxon>Metazoa</taxon>
        <taxon>Chordata</taxon>
        <taxon>Craniata</taxon>
        <taxon>Vertebrata</taxon>
        <taxon>Euteleostomi</taxon>
        <taxon>Mammalia</taxon>
        <taxon>Eutheria</taxon>
        <taxon>Euarchontoglires</taxon>
        <taxon>Glires</taxon>
        <taxon>Rodentia</taxon>
        <taxon>Myomorpha</taxon>
        <taxon>Muroidea</taxon>
        <taxon>Muridae</taxon>
        <taxon>Murinae</taxon>
        <taxon>Mus</taxon>
        <taxon>Mus</taxon>
    </lineage>
</organism>
<evidence type="ECO:0000250" key="1">
    <source>
        <dbReference type="UniProtKB" id="P49720"/>
    </source>
</evidence>
<evidence type="ECO:0000255" key="2">
    <source>
        <dbReference type="PROSITE-ProRule" id="PRU00809"/>
    </source>
</evidence>
<evidence type="ECO:0000269" key="3">
    <source>
    </source>
</evidence>
<evidence type="ECO:0000269" key="4">
    <source>
    </source>
</evidence>
<evidence type="ECO:0000269" key="5">
    <source>
    </source>
</evidence>
<evidence type="ECO:0000305" key="6">
    <source>
    </source>
</evidence>
<evidence type="ECO:0007744" key="7">
    <source>
    </source>
</evidence>
<evidence type="ECO:0007829" key="8">
    <source>
        <dbReference type="PDB" id="3UNB"/>
    </source>
</evidence>
<evidence type="ECO:0007829" key="9">
    <source>
        <dbReference type="PDB" id="3UNH"/>
    </source>
</evidence>
<reference key="1">
    <citation type="journal article" date="1999" name="Immunogenetics">
        <title>The complete primary structure of mouse 20S proteasomes.</title>
        <authorList>
            <person name="Elenich L.A."/>
            <person name="Nandi D."/>
            <person name="Kent E.A."/>
            <person name="McCluskey T.S."/>
            <person name="Cruz M."/>
            <person name="Iyer M.N."/>
            <person name="Woodward E.C."/>
            <person name="Conn C.W."/>
            <person name="Ochoa A.L."/>
            <person name="Ginsburg D.B."/>
            <person name="Monaco J.J."/>
        </authorList>
    </citation>
    <scope>NUCLEOTIDE SEQUENCE [MRNA]</scope>
    <source>
        <strain>B10.BR</strain>
    </source>
</reference>
<reference key="2">
    <citation type="journal article" date="2005" name="Science">
        <title>The transcriptional landscape of the mammalian genome.</title>
        <authorList>
            <person name="Carninci P."/>
            <person name="Kasukawa T."/>
            <person name="Katayama S."/>
            <person name="Gough J."/>
            <person name="Frith M.C."/>
            <person name="Maeda N."/>
            <person name="Oyama R."/>
            <person name="Ravasi T."/>
            <person name="Lenhard B."/>
            <person name="Wells C."/>
            <person name="Kodzius R."/>
            <person name="Shimokawa K."/>
            <person name="Bajic V.B."/>
            <person name="Brenner S.E."/>
            <person name="Batalov S."/>
            <person name="Forrest A.R."/>
            <person name="Zavolan M."/>
            <person name="Davis M.J."/>
            <person name="Wilming L.G."/>
            <person name="Aidinis V."/>
            <person name="Allen J.E."/>
            <person name="Ambesi-Impiombato A."/>
            <person name="Apweiler R."/>
            <person name="Aturaliya R.N."/>
            <person name="Bailey T.L."/>
            <person name="Bansal M."/>
            <person name="Baxter L."/>
            <person name="Beisel K.W."/>
            <person name="Bersano T."/>
            <person name="Bono H."/>
            <person name="Chalk A.M."/>
            <person name="Chiu K.P."/>
            <person name="Choudhary V."/>
            <person name="Christoffels A."/>
            <person name="Clutterbuck D.R."/>
            <person name="Crowe M.L."/>
            <person name="Dalla E."/>
            <person name="Dalrymple B.P."/>
            <person name="de Bono B."/>
            <person name="Della Gatta G."/>
            <person name="di Bernardo D."/>
            <person name="Down T."/>
            <person name="Engstrom P."/>
            <person name="Fagiolini M."/>
            <person name="Faulkner G."/>
            <person name="Fletcher C.F."/>
            <person name="Fukushima T."/>
            <person name="Furuno M."/>
            <person name="Futaki S."/>
            <person name="Gariboldi M."/>
            <person name="Georgii-Hemming P."/>
            <person name="Gingeras T.R."/>
            <person name="Gojobori T."/>
            <person name="Green R.E."/>
            <person name="Gustincich S."/>
            <person name="Harbers M."/>
            <person name="Hayashi Y."/>
            <person name="Hensch T.K."/>
            <person name="Hirokawa N."/>
            <person name="Hill D."/>
            <person name="Huminiecki L."/>
            <person name="Iacono M."/>
            <person name="Ikeo K."/>
            <person name="Iwama A."/>
            <person name="Ishikawa T."/>
            <person name="Jakt M."/>
            <person name="Kanapin A."/>
            <person name="Katoh M."/>
            <person name="Kawasawa Y."/>
            <person name="Kelso J."/>
            <person name="Kitamura H."/>
            <person name="Kitano H."/>
            <person name="Kollias G."/>
            <person name="Krishnan S.P."/>
            <person name="Kruger A."/>
            <person name="Kummerfeld S.K."/>
            <person name="Kurochkin I.V."/>
            <person name="Lareau L.F."/>
            <person name="Lazarevic D."/>
            <person name="Lipovich L."/>
            <person name="Liu J."/>
            <person name="Liuni S."/>
            <person name="McWilliam S."/>
            <person name="Madan Babu M."/>
            <person name="Madera M."/>
            <person name="Marchionni L."/>
            <person name="Matsuda H."/>
            <person name="Matsuzawa S."/>
            <person name="Miki H."/>
            <person name="Mignone F."/>
            <person name="Miyake S."/>
            <person name="Morris K."/>
            <person name="Mottagui-Tabar S."/>
            <person name="Mulder N."/>
            <person name="Nakano N."/>
            <person name="Nakauchi H."/>
            <person name="Ng P."/>
            <person name="Nilsson R."/>
            <person name="Nishiguchi S."/>
            <person name="Nishikawa S."/>
            <person name="Nori F."/>
            <person name="Ohara O."/>
            <person name="Okazaki Y."/>
            <person name="Orlando V."/>
            <person name="Pang K.C."/>
            <person name="Pavan W.J."/>
            <person name="Pavesi G."/>
            <person name="Pesole G."/>
            <person name="Petrovsky N."/>
            <person name="Piazza S."/>
            <person name="Reed J."/>
            <person name="Reid J.F."/>
            <person name="Ring B.Z."/>
            <person name="Ringwald M."/>
            <person name="Rost B."/>
            <person name="Ruan Y."/>
            <person name="Salzberg S.L."/>
            <person name="Sandelin A."/>
            <person name="Schneider C."/>
            <person name="Schoenbach C."/>
            <person name="Sekiguchi K."/>
            <person name="Semple C.A."/>
            <person name="Seno S."/>
            <person name="Sessa L."/>
            <person name="Sheng Y."/>
            <person name="Shibata Y."/>
            <person name="Shimada H."/>
            <person name="Shimada K."/>
            <person name="Silva D."/>
            <person name="Sinclair B."/>
            <person name="Sperling S."/>
            <person name="Stupka E."/>
            <person name="Sugiura K."/>
            <person name="Sultana R."/>
            <person name="Takenaka Y."/>
            <person name="Taki K."/>
            <person name="Tammoja K."/>
            <person name="Tan S.L."/>
            <person name="Tang S."/>
            <person name="Taylor M.S."/>
            <person name="Tegner J."/>
            <person name="Teichmann S.A."/>
            <person name="Ueda H.R."/>
            <person name="van Nimwegen E."/>
            <person name="Verardo R."/>
            <person name="Wei C.L."/>
            <person name="Yagi K."/>
            <person name="Yamanishi H."/>
            <person name="Zabarovsky E."/>
            <person name="Zhu S."/>
            <person name="Zimmer A."/>
            <person name="Hide W."/>
            <person name="Bult C."/>
            <person name="Grimmond S.M."/>
            <person name="Teasdale R.D."/>
            <person name="Liu E.T."/>
            <person name="Brusic V."/>
            <person name="Quackenbush J."/>
            <person name="Wahlestedt C."/>
            <person name="Mattick J.S."/>
            <person name="Hume D.A."/>
            <person name="Kai C."/>
            <person name="Sasaki D."/>
            <person name="Tomaru Y."/>
            <person name="Fukuda S."/>
            <person name="Kanamori-Katayama M."/>
            <person name="Suzuki M."/>
            <person name="Aoki J."/>
            <person name="Arakawa T."/>
            <person name="Iida J."/>
            <person name="Imamura K."/>
            <person name="Itoh M."/>
            <person name="Kato T."/>
            <person name="Kawaji H."/>
            <person name="Kawagashira N."/>
            <person name="Kawashima T."/>
            <person name="Kojima M."/>
            <person name="Kondo S."/>
            <person name="Konno H."/>
            <person name="Nakano K."/>
            <person name="Ninomiya N."/>
            <person name="Nishio T."/>
            <person name="Okada M."/>
            <person name="Plessy C."/>
            <person name="Shibata K."/>
            <person name="Shiraki T."/>
            <person name="Suzuki S."/>
            <person name="Tagami M."/>
            <person name="Waki K."/>
            <person name="Watahiki A."/>
            <person name="Okamura-Oho Y."/>
            <person name="Suzuki H."/>
            <person name="Kawai J."/>
            <person name="Hayashizaki Y."/>
        </authorList>
    </citation>
    <scope>NUCLEOTIDE SEQUENCE [LARGE SCALE MRNA]</scope>
    <source>
        <strain>C57BL/6J</strain>
        <tissue>Kidney</tissue>
    </source>
</reference>
<reference key="3">
    <citation type="journal article" date="2004" name="Genome Res.">
        <title>The status, quality, and expansion of the NIH full-length cDNA project: the Mammalian Gene Collection (MGC).</title>
        <authorList>
            <consortium name="The MGC Project Team"/>
        </authorList>
    </citation>
    <scope>NUCLEOTIDE SEQUENCE [LARGE SCALE MRNA]</scope>
    <source>
        <strain>FVB/N</strain>
        <tissue>Mammary gland</tissue>
    </source>
</reference>
<reference key="4">
    <citation type="submission" date="2007-04" db="UniProtKB">
        <authorList>
            <person name="Lubec G."/>
            <person name="Klug S."/>
            <person name="Kang S.U."/>
        </authorList>
    </citation>
    <scope>PROTEIN SEQUENCE OF 6-14; 49-66; 71-77; 100-115 AND 394-403</scope>
    <scope>IDENTIFICATION BY MASS SPECTROMETRY</scope>
    <source>
        <strain>C57BL/6J</strain>
        <tissue>Brain</tissue>
        <tissue>Hippocampus</tissue>
    </source>
</reference>
<reference key="5">
    <citation type="journal article" date="2006" name="Circ. Res.">
        <title>Mapping the murine cardiac 26S proteasome complexes.</title>
        <authorList>
            <person name="Gomes A.V."/>
            <person name="Zong C."/>
            <person name="Edmondson R.D."/>
            <person name="Li X."/>
            <person name="Stefani E."/>
            <person name="Zhang J."/>
            <person name="Jones R.C."/>
            <person name="Thyparambil S."/>
            <person name="Wang G.W."/>
            <person name="Qiao X."/>
            <person name="Bardag-Gorce F."/>
            <person name="Ping P."/>
        </authorList>
    </citation>
    <scope>IDENTIFICATION IN THE 20S PROTEASOME CORE COMPLEX</scope>
    <scope>ACETYLATION AT SER-2</scope>
</reference>
<reference key="6">
    <citation type="journal article" date="2006" name="Mol. Cell. Biol.">
        <title>Proteasome activator PA200 is required for normal spermatogenesis.</title>
        <authorList>
            <person name="Khor B."/>
            <person name="Bredemeyer A.L."/>
            <person name="Huang C.-Y."/>
            <person name="Turnbull I.R."/>
            <person name="Evans R."/>
            <person name="Maggi L.B. Jr."/>
            <person name="White J.M."/>
            <person name="Walker L.M."/>
            <person name="Carnes K."/>
            <person name="Hess R.A."/>
            <person name="Sleckman B.P."/>
        </authorList>
    </citation>
    <scope>FUNCTION</scope>
</reference>
<reference key="7">
    <citation type="journal article" date="2010" name="Cell">
        <title>A tissue-specific atlas of mouse protein phosphorylation and expression.</title>
        <authorList>
            <person name="Huttlin E.L."/>
            <person name="Jedrychowski M.P."/>
            <person name="Elias J.E."/>
            <person name="Goswami T."/>
            <person name="Rad R."/>
            <person name="Beausoleil S.A."/>
            <person name="Villen J."/>
            <person name="Haas W."/>
            <person name="Sowa M.E."/>
            <person name="Gygi S.P."/>
        </authorList>
    </citation>
    <scope>IDENTIFICATION BY MASS SPECTROMETRY [LARGE SCALE ANALYSIS]</scope>
    <source>
        <tissue>Brain</tissue>
        <tissue>Brown adipose tissue</tissue>
        <tissue>Heart</tissue>
        <tissue>Kidney</tissue>
        <tissue>Liver</tissue>
        <tissue>Lung</tissue>
        <tissue>Pancreas</tissue>
        <tissue>Spleen</tissue>
        <tissue>Testis</tissue>
    </source>
</reference>
<reference key="8">
    <citation type="journal article" date="2013" name="Mol. Cell">
        <title>SIRT5-mediated lysine desuccinylation impacts diverse metabolic pathways.</title>
        <authorList>
            <person name="Park J."/>
            <person name="Chen Y."/>
            <person name="Tishkoff D.X."/>
            <person name="Peng C."/>
            <person name="Tan M."/>
            <person name="Dai L."/>
            <person name="Xie Z."/>
            <person name="Zhang Y."/>
            <person name="Zwaans B.M."/>
            <person name="Skinner M.E."/>
            <person name="Lombard D.B."/>
            <person name="Zhao Y."/>
        </authorList>
    </citation>
    <scope>ACETYLATION [LARGE SCALE ANALYSIS] AT LYS-77</scope>
    <scope>IDENTIFICATION BY MASS SPECTROMETRY [LARGE SCALE ANALYSIS]</scope>
    <source>
        <tissue>Embryonic fibroblast</tissue>
    </source>
</reference>
<reference key="9">
    <citation type="journal article" date="2012" name="Cell">
        <title>Immuno- and constitutive proteasome crystal structures reveal differences in substrate and inhibitor specificity.</title>
        <authorList>
            <person name="Huber E.M."/>
            <person name="Basler M."/>
            <person name="Schwab R."/>
            <person name="Heinemeyer W."/>
            <person name="Kirk C.J."/>
            <person name="Groettrup M."/>
            <person name="Groll M."/>
        </authorList>
    </citation>
    <scope>X-RAY CRYSTALLOGRAPHY (2.90 ANGSTROMS) OF 20S IMMUNOPROTEASOME</scope>
    <scope>SUBUNIT</scope>
    <scope>FUNCTION</scope>
    <scope>TISSUE SPECIFICITY</scope>
</reference>
<accession>Q9R1P1</accession>
<protein>
    <recommendedName>
        <fullName>Proteasome subunit beta type-3</fullName>
    </recommendedName>
    <alternativeName>
        <fullName>Proteasome chain 13</fullName>
    </alternativeName>
    <alternativeName>
        <fullName>Proteasome component C10-II</fullName>
    </alternativeName>
    <alternativeName>
        <fullName>Proteasome subunit beta-3</fullName>
        <shortName>beta-3</shortName>
    </alternativeName>
    <alternativeName>
        <fullName>Proteasome theta chain</fullName>
    </alternativeName>
</protein>
<feature type="initiator methionine" description="Removed" evidence="6">
    <location>
        <position position="1"/>
    </location>
</feature>
<feature type="chain" id="PRO_0000148058" description="Proteasome subunit beta type-3">
    <location>
        <begin position="2"/>
        <end position="205"/>
    </location>
</feature>
<feature type="modified residue" description="N-acetylserine" evidence="4">
    <location>
        <position position="2"/>
    </location>
</feature>
<feature type="modified residue" description="N6-acetyllysine" evidence="7">
    <location>
        <position position="77"/>
    </location>
</feature>
<feature type="turn" evidence="8">
    <location>
        <begin position="4"/>
        <end position="7"/>
    </location>
</feature>
<feature type="strand" evidence="8">
    <location>
        <begin position="10"/>
        <end position="15"/>
    </location>
</feature>
<feature type="strand" evidence="8">
    <location>
        <begin position="20"/>
        <end position="25"/>
    </location>
</feature>
<feature type="strand" evidence="8">
    <location>
        <begin position="28"/>
        <end position="30"/>
    </location>
</feature>
<feature type="strand" evidence="8">
    <location>
        <begin position="33"/>
        <end position="37"/>
    </location>
</feature>
<feature type="strand" evidence="8">
    <location>
        <begin position="42"/>
        <end position="55"/>
    </location>
</feature>
<feature type="helix" evidence="8">
    <location>
        <begin position="57"/>
        <end position="77"/>
    </location>
</feature>
<feature type="strand" evidence="8">
    <location>
        <begin position="78"/>
        <end position="80"/>
    </location>
</feature>
<feature type="helix" evidence="8">
    <location>
        <begin position="84"/>
        <end position="96"/>
    </location>
</feature>
<feature type="turn" evidence="8">
    <location>
        <begin position="97"/>
        <end position="100"/>
    </location>
</feature>
<feature type="strand" evidence="8">
    <location>
        <begin position="104"/>
        <end position="112"/>
    </location>
</feature>
<feature type="turn" evidence="8">
    <location>
        <begin position="114"/>
        <end position="116"/>
    </location>
</feature>
<feature type="strand" evidence="8">
    <location>
        <begin position="119"/>
        <end position="123"/>
    </location>
</feature>
<feature type="strand" evidence="9">
    <location>
        <begin position="130"/>
        <end position="132"/>
    </location>
</feature>
<feature type="strand" evidence="8">
    <location>
        <begin position="134"/>
        <end position="140"/>
    </location>
</feature>
<feature type="helix" evidence="8">
    <location>
        <begin position="143"/>
        <end position="153"/>
    </location>
</feature>
<feature type="helix" evidence="8">
    <location>
        <begin position="160"/>
        <end position="175"/>
    </location>
</feature>
<feature type="strand" evidence="8">
    <location>
        <begin position="178"/>
        <end position="181"/>
    </location>
</feature>
<feature type="strand" evidence="8">
    <location>
        <begin position="185"/>
        <end position="190"/>
    </location>
</feature>
<feature type="strand" evidence="8">
    <location>
        <begin position="192"/>
        <end position="200"/>
    </location>
</feature>
<comment type="function">
    <text evidence="3 5">Non-catalytic component of the 20S core proteasome complex involved in the proteolytic degradation of most intracellular proteins. This complex plays numerous essential roles within the cell by associating with different regulatory particles. Associated with two 19S regulatory particles, forms the 26S proteasome and thus participates in the ATP-dependent degradation of ubiquitinated proteins. The 26S proteasome plays a key role in the maintenance of protein homeostasis by removing misfolded or damaged proteins that could impair cellular functions, and by removing proteins whose functions are no longer required. Associated with the PA200 or PA28, the 20S proteasome mediates ubiquitin-independent protein degradation. This type of proteolysis is required in several pathways including spermatogenesis (20S-PA200 complex) or generation of a subset of MHC class I-presented antigenic peptides (20S-PA28 complex).</text>
</comment>
<comment type="subunit">
    <text evidence="4 5">The 26S proteasome consists of a 20S proteasome core and two 19S regulatory subunits. The 20S proteasome core is a barrel-shaped complex made of 28 subunits that are arranged in four stacked rings. The two outer rings are each formed by seven alpha subunits, and the two inner rings are formed by seven beta subunits. The proteolytic activity is exerted by three beta-subunits PSMB5, PSMB6 and PSMB7.</text>
</comment>
<comment type="subcellular location">
    <subcellularLocation>
        <location evidence="1">Cytoplasm</location>
    </subcellularLocation>
    <subcellularLocation>
        <location evidence="1">Nucleus</location>
    </subcellularLocation>
    <text evidence="1">Translocated from the cytoplasm into the nucleus following interaction with AKIRIN2, which bridges the proteasome with the nuclear import receptor IPO9.</text>
</comment>
<comment type="tissue specificity">
    <text evidence="5">Detected in liver (at protein level).</text>
</comment>
<comment type="similarity">
    <text evidence="2">Belongs to the peptidase T1B family.</text>
</comment>